<accession>Q2L256</accession>
<proteinExistence type="inferred from homology"/>
<evidence type="ECO:0000255" key="1">
    <source>
        <dbReference type="HAMAP-Rule" id="MF_00444"/>
    </source>
</evidence>
<evidence type="ECO:0000305" key="2"/>
<protein>
    <recommendedName>
        <fullName evidence="1">ATP-dependent Clp protease proteolytic subunit</fullName>
        <ecNumber evidence="1">3.4.21.92</ecNumber>
    </recommendedName>
    <alternativeName>
        <fullName evidence="1">Endopeptidase Clp</fullName>
    </alternativeName>
</protein>
<dbReference type="EC" id="3.4.21.92" evidence="1"/>
<dbReference type="EMBL" id="AM167904">
    <property type="protein sequence ID" value="CAJ49110.1"/>
    <property type="status" value="ALT_INIT"/>
    <property type="molecule type" value="Genomic_DNA"/>
</dbReference>
<dbReference type="RefSeq" id="WP_012417174.1">
    <property type="nucleotide sequence ID" value="NC_010645.1"/>
</dbReference>
<dbReference type="SMR" id="Q2L256"/>
<dbReference type="STRING" id="360910.BAV1497"/>
<dbReference type="MEROPS" id="S14.001"/>
<dbReference type="GeneID" id="92935438"/>
<dbReference type="KEGG" id="bav:BAV1497"/>
<dbReference type="eggNOG" id="COG0740">
    <property type="taxonomic scope" value="Bacteria"/>
</dbReference>
<dbReference type="HOGENOM" id="CLU_058707_3_2_4"/>
<dbReference type="OrthoDB" id="9802800at2"/>
<dbReference type="Proteomes" id="UP000001977">
    <property type="component" value="Chromosome"/>
</dbReference>
<dbReference type="GO" id="GO:0005737">
    <property type="term" value="C:cytoplasm"/>
    <property type="evidence" value="ECO:0007669"/>
    <property type="project" value="UniProtKB-SubCell"/>
</dbReference>
<dbReference type="GO" id="GO:0009368">
    <property type="term" value="C:endopeptidase Clp complex"/>
    <property type="evidence" value="ECO:0007669"/>
    <property type="project" value="TreeGrafter"/>
</dbReference>
<dbReference type="GO" id="GO:0004176">
    <property type="term" value="F:ATP-dependent peptidase activity"/>
    <property type="evidence" value="ECO:0007669"/>
    <property type="project" value="InterPro"/>
</dbReference>
<dbReference type="GO" id="GO:0051117">
    <property type="term" value="F:ATPase binding"/>
    <property type="evidence" value="ECO:0007669"/>
    <property type="project" value="TreeGrafter"/>
</dbReference>
<dbReference type="GO" id="GO:0004252">
    <property type="term" value="F:serine-type endopeptidase activity"/>
    <property type="evidence" value="ECO:0007669"/>
    <property type="project" value="UniProtKB-UniRule"/>
</dbReference>
<dbReference type="GO" id="GO:0006515">
    <property type="term" value="P:protein quality control for misfolded or incompletely synthesized proteins"/>
    <property type="evidence" value="ECO:0007669"/>
    <property type="project" value="TreeGrafter"/>
</dbReference>
<dbReference type="CDD" id="cd07017">
    <property type="entry name" value="S14_ClpP_2"/>
    <property type="match status" value="1"/>
</dbReference>
<dbReference type="FunFam" id="3.90.226.10:FF:000001">
    <property type="entry name" value="ATP-dependent Clp protease proteolytic subunit"/>
    <property type="match status" value="1"/>
</dbReference>
<dbReference type="Gene3D" id="3.90.226.10">
    <property type="entry name" value="2-enoyl-CoA Hydratase, Chain A, domain 1"/>
    <property type="match status" value="1"/>
</dbReference>
<dbReference type="HAMAP" id="MF_00444">
    <property type="entry name" value="ClpP"/>
    <property type="match status" value="1"/>
</dbReference>
<dbReference type="InterPro" id="IPR001907">
    <property type="entry name" value="ClpP"/>
</dbReference>
<dbReference type="InterPro" id="IPR029045">
    <property type="entry name" value="ClpP/crotonase-like_dom_sf"/>
</dbReference>
<dbReference type="InterPro" id="IPR023562">
    <property type="entry name" value="ClpP/TepA"/>
</dbReference>
<dbReference type="InterPro" id="IPR033135">
    <property type="entry name" value="ClpP_His_AS"/>
</dbReference>
<dbReference type="NCBIfam" id="TIGR00493">
    <property type="entry name" value="clpP"/>
    <property type="match status" value="1"/>
</dbReference>
<dbReference type="NCBIfam" id="NF001368">
    <property type="entry name" value="PRK00277.1"/>
    <property type="match status" value="1"/>
</dbReference>
<dbReference type="NCBIfam" id="NF009205">
    <property type="entry name" value="PRK12553.1"/>
    <property type="match status" value="1"/>
</dbReference>
<dbReference type="PANTHER" id="PTHR10381">
    <property type="entry name" value="ATP-DEPENDENT CLP PROTEASE PROTEOLYTIC SUBUNIT"/>
    <property type="match status" value="1"/>
</dbReference>
<dbReference type="PANTHER" id="PTHR10381:SF70">
    <property type="entry name" value="ATP-DEPENDENT CLP PROTEASE PROTEOLYTIC SUBUNIT"/>
    <property type="match status" value="1"/>
</dbReference>
<dbReference type="Pfam" id="PF00574">
    <property type="entry name" value="CLP_protease"/>
    <property type="match status" value="1"/>
</dbReference>
<dbReference type="PRINTS" id="PR00127">
    <property type="entry name" value="CLPPROTEASEP"/>
</dbReference>
<dbReference type="SUPFAM" id="SSF52096">
    <property type="entry name" value="ClpP/crotonase"/>
    <property type="match status" value="1"/>
</dbReference>
<dbReference type="PROSITE" id="PS00382">
    <property type="entry name" value="CLP_PROTEASE_HIS"/>
    <property type="match status" value="1"/>
</dbReference>
<comment type="function">
    <text evidence="1">Cleaves peptides in various proteins in a process that requires ATP hydrolysis. Has a chymotrypsin-like activity. Plays a major role in the degradation of misfolded proteins.</text>
</comment>
<comment type="catalytic activity">
    <reaction evidence="1">
        <text>Hydrolysis of proteins to small peptides in the presence of ATP and magnesium. alpha-casein is the usual test substrate. In the absence of ATP, only oligopeptides shorter than five residues are hydrolyzed (such as succinyl-Leu-Tyr-|-NHMec, and Leu-Tyr-Leu-|-Tyr-Trp, in which cleavage of the -Tyr-|-Leu- and -Tyr-|-Trp bonds also occurs).</text>
        <dbReference type="EC" id="3.4.21.92"/>
    </reaction>
</comment>
<comment type="subunit">
    <text evidence="1">Fourteen ClpP subunits assemble into 2 heptameric rings which stack back to back to give a disk-like structure with a central cavity, resembling the structure of eukaryotic proteasomes.</text>
</comment>
<comment type="subcellular location">
    <subcellularLocation>
        <location evidence="1">Cytoplasm</location>
    </subcellularLocation>
</comment>
<comment type="similarity">
    <text evidence="1">Belongs to the peptidase S14 family.</text>
</comment>
<comment type="sequence caution" evidence="2">
    <conflict type="erroneous initiation">
        <sequence resource="EMBL-CDS" id="CAJ49110"/>
    </conflict>
</comment>
<keyword id="KW-0963">Cytoplasm</keyword>
<keyword id="KW-0378">Hydrolase</keyword>
<keyword id="KW-0645">Protease</keyword>
<keyword id="KW-1185">Reference proteome</keyword>
<keyword id="KW-0720">Serine protease</keyword>
<feature type="chain" id="PRO_0000236384" description="ATP-dependent Clp protease proteolytic subunit">
    <location>
        <begin position="1"/>
        <end position="201"/>
    </location>
</feature>
<feature type="active site" description="Nucleophile" evidence="1">
    <location>
        <position position="103"/>
    </location>
</feature>
<feature type="active site" evidence="1">
    <location>
        <position position="128"/>
    </location>
</feature>
<sequence length="201" mass="22009">MTPTGLGYIPMVVEQSGRGERAYDIYSRLLRERLIFLVGPVNDATANLVVAQLLFLESENPDKDISFYINSPGGSVYAGMAIFDTMQFVKPDVSTLCTGLAASMGAFLLAAGKKGKRFSLPNSRIMIHQPSGGAQGQASDIQIQAKEILDLRERLNRILAENTGQSMERIAIDTERDTFMSAEDALSYGLVDKVLARREDV</sequence>
<gene>
    <name evidence="1" type="primary">clpP</name>
    <name type="ordered locus">BAV1497</name>
</gene>
<organism>
    <name type="scientific">Bordetella avium (strain 197N)</name>
    <dbReference type="NCBI Taxonomy" id="360910"/>
    <lineage>
        <taxon>Bacteria</taxon>
        <taxon>Pseudomonadati</taxon>
        <taxon>Pseudomonadota</taxon>
        <taxon>Betaproteobacteria</taxon>
        <taxon>Burkholderiales</taxon>
        <taxon>Alcaligenaceae</taxon>
        <taxon>Bordetella</taxon>
    </lineage>
</organism>
<name>CLPP_BORA1</name>
<reference key="1">
    <citation type="journal article" date="2006" name="J. Bacteriol.">
        <title>Comparison of the genome sequence of the poultry pathogen Bordetella avium with those of B. bronchiseptica, B. pertussis, and B. parapertussis reveals extensive diversity in surface structures associated with host interaction.</title>
        <authorList>
            <person name="Sebaihia M."/>
            <person name="Preston A."/>
            <person name="Maskell D.J."/>
            <person name="Kuzmiak H."/>
            <person name="Connell T.D."/>
            <person name="King N.D."/>
            <person name="Orndorff P.E."/>
            <person name="Miyamoto D.M."/>
            <person name="Thomson N.R."/>
            <person name="Harris D."/>
            <person name="Goble A."/>
            <person name="Lord A."/>
            <person name="Murphy L."/>
            <person name="Quail M.A."/>
            <person name="Rutter S."/>
            <person name="Squares R."/>
            <person name="Squares S."/>
            <person name="Woodward J."/>
            <person name="Parkhill J."/>
            <person name="Temple L.M."/>
        </authorList>
    </citation>
    <scope>NUCLEOTIDE SEQUENCE [LARGE SCALE GENOMIC DNA]</scope>
    <source>
        <strain>197N</strain>
    </source>
</reference>